<gene>
    <name evidence="1" type="primary">lpxC</name>
    <name type="ordered locus">CKO_03279</name>
</gene>
<dbReference type="EC" id="3.5.1.108" evidence="1"/>
<dbReference type="EMBL" id="CP000822">
    <property type="protein sequence ID" value="ABV14363.1"/>
    <property type="molecule type" value="Genomic_DNA"/>
</dbReference>
<dbReference type="RefSeq" id="WP_012134068.1">
    <property type="nucleotide sequence ID" value="NC_009792.1"/>
</dbReference>
<dbReference type="BMRB" id="A8ALK0"/>
<dbReference type="SMR" id="A8ALK0"/>
<dbReference type="STRING" id="290338.CKO_03279"/>
<dbReference type="GeneID" id="45137052"/>
<dbReference type="KEGG" id="cko:CKO_03279"/>
<dbReference type="HOGENOM" id="CLU_046528_1_0_6"/>
<dbReference type="OrthoDB" id="9802746at2"/>
<dbReference type="UniPathway" id="UPA00359">
    <property type="reaction ID" value="UER00478"/>
</dbReference>
<dbReference type="Proteomes" id="UP000008148">
    <property type="component" value="Chromosome"/>
</dbReference>
<dbReference type="GO" id="GO:0016020">
    <property type="term" value="C:membrane"/>
    <property type="evidence" value="ECO:0007669"/>
    <property type="project" value="GOC"/>
</dbReference>
<dbReference type="GO" id="GO:0046872">
    <property type="term" value="F:metal ion binding"/>
    <property type="evidence" value="ECO:0007669"/>
    <property type="project" value="UniProtKB-KW"/>
</dbReference>
<dbReference type="GO" id="GO:0103117">
    <property type="term" value="F:UDP-3-O-acyl-N-acetylglucosamine deacetylase activity"/>
    <property type="evidence" value="ECO:0007669"/>
    <property type="project" value="UniProtKB-UniRule"/>
</dbReference>
<dbReference type="GO" id="GO:0009245">
    <property type="term" value="P:lipid A biosynthetic process"/>
    <property type="evidence" value="ECO:0007669"/>
    <property type="project" value="UniProtKB-UniRule"/>
</dbReference>
<dbReference type="FunFam" id="3.30.1700.10:FF:000001">
    <property type="entry name" value="UDP-3-O-acyl-N-acetylglucosamine deacetylase"/>
    <property type="match status" value="1"/>
</dbReference>
<dbReference type="FunFam" id="3.30.230.20:FF:000001">
    <property type="entry name" value="UDP-3-O-acyl-N-acetylglucosamine deacetylase"/>
    <property type="match status" value="1"/>
</dbReference>
<dbReference type="Gene3D" id="3.30.230.20">
    <property type="entry name" value="lpxc deacetylase, domain 1"/>
    <property type="match status" value="1"/>
</dbReference>
<dbReference type="Gene3D" id="3.30.1700.10">
    <property type="entry name" value="lpxc deacetylase, domain 2"/>
    <property type="match status" value="1"/>
</dbReference>
<dbReference type="HAMAP" id="MF_00388">
    <property type="entry name" value="LpxC"/>
    <property type="match status" value="1"/>
</dbReference>
<dbReference type="InterPro" id="IPR020568">
    <property type="entry name" value="Ribosomal_Su5_D2-typ_SF"/>
</dbReference>
<dbReference type="InterPro" id="IPR004463">
    <property type="entry name" value="UDP-acyl_GlcNac_deAcase"/>
</dbReference>
<dbReference type="InterPro" id="IPR011334">
    <property type="entry name" value="UDP-acyl_GlcNac_deAcase_C"/>
</dbReference>
<dbReference type="InterPro" id="IPR015870">
    <property type="entry name" value="UDP-acyl_N-AcGlcN_deAcase_N"/>
</dbReference>
<dbReference type="NCBIfam" id="TIGR00325">
    <property type="entry name" value="lpxC"/>
    <property type="match status" value="1"/>
</dbReference>
<dbReference type="PANTHER" id="PTHR33694">
    <property type="entry name" value="UDP-3-O-ACYL-N-ACETYLGLUCOSAMINE DEACETYLASE 1, MITOCHONDRIAL-RELATED"/>
    <property type="match status" value="1"/>
</dbReference>
<dbReference type="PANTHER" id="PTHR33694:SF1">
    <property type="entry name" value="UDP-3-O-ACYL-N-ACETYLGLUCOSAMINE DEACETYLASE 1, MITOCHONDRIAL-RELATED"/>
    <property type="match status" value="1"/>
</dbReference>
<dbReference type="Pfam" id="PF03331">
    <property type="entry name" value="LpxC"/>
    <property type="match status" value="1"/>
</dbReference>
<dbReference type="SUPFAM" id="SSF54211">
    <property type="entry name" value="Ribosomal protein S5 domain 2-like"/>
    <property type="match status" value="2"/>
</dbReference>
<feature type="chain" id="PRO_1000013204" description="UDP-3-O-acyl-N-acetylglucosamine deacetylase">
    <location>
        <begin position="1"/>
        <end position="305"/>
    </location>
</feature>
<feature type="active site" description="Proton donor" evidence="1">
    <location>
        <position position="265"/>
    </location>
</feature>
<feature type="binding site" evidence="1">
    <location>
        <position position="79"/>
    </location>
    <ligand>
        <name>Zn(2+)</name>
        <dbReference type="ChEBI" id="CHEBI:29105"/>
    </ligand>
</feature>
<feature type="binding site" evidence="1">
    <location>
        <position position="238"/>
    </location>
    <ligand>
        <name>Zn(2+)</name>
        <dbReference type="ChEBI" id="CHEBI:29105"/>
    </ligand>
</feature>
<feature type="binding site" evidence="1">
    <location>
        <position position="242"/>
    </location>
    <ligand>
        <name>Zn(2+)</name>
        <dbReference type="ChEBI" id="CHEBI:29105"/>
    </ligand>
</feature>
<organism>
    <name type="scientific">Citrobacter koseri (strain ATCC BAA-895 / CDC 4225-83 / SGSC4696)</name>
    <dbReference type="NCBI Taxonomy" id="290338"/>
    <lineage>
        <taxon>Bacteria</taxon>
        <taxon>Pseudomonadati</taxon>
        <taxon>Pseudomonadota</taxon>
        <taxon>Gammaproteobacteria</taxon>
        <taxon>Enterobacterales</taxon>
        <taxon>Enterobacteriaceae</taxon>
        <taxon>Citrobacter</taxon>
    </lineage>
</organism>
<keyword id="KW-0378">Hydrolase</keyword>
<keyword id="KW-0441">Lipid A biosynthesis</keyword>
<keyword id="KW-0444">Lipid biosynthesis</keyword>
<keyword id="KW-0443">Lipid metabolism</keyword>
<keyword id="KW-0479">Metal-binding</keyword>
<keyword id="KW-1185">Reference proteome</keyword>
<keyword id="KW-0862">Zinc</keyword>
<proteinExistence type="inferred from homology"/>
<protein>
    <recommendedName>
        <fullName evidence="1">UDP-3-O-acyl-N-acetylglucosamine deacetylase</fullName>
        <shortName evidence="1">UDP-3-O-acyl-GlcNAc deacetylase</shortName>
        <ecNumber evidence="1">3.5.1.108</ecNumber>
    </recommendedName>
    <alternativeName>
        <fullName evidence="1">UDP-3-O-[R-3-hydroxymyristoyl]-N-acetylglucosamine deacetylase</fullName>
    </alternativeName>
</protein>
<reference key="1">
    <citation type="submission" date="2007-08" db="EMBL/GenBank/DDBJ databases">
        <authorList>
            <consortium name="The Citrobacter koseri Genome Sequencing Project"/>
            <person name="McClelland M."/>
            <person name="Sanderson E.K."/>
            <person name="Porwollik S."/>
            <person name="Spieth J."/>
            <person name="Clifton W.S."/>
            <person name="Latreille P."/>
            <person name="Courtney L."/>
            <person name="Wang C."/>
            <person name="Pepin K."/>
            <person name="Bhonagiri V."/>
            <person name="Nash W."/>
            <person name="Johnson M."/>
            <person name="Thiruvilangam P."/>
            <person name="Wilson R."/>
        </authorList>
    </citation>
    <scope>NUCLEOTIDE SEQUENCE [LARGE SCALE GENOMIC DNA]</scope>
    <source>
        <strain>ATCC BAA-895 / CDC 4225-83 / SGSC4696</strain>
    </source>
</reference>
<accession>A8ALK0</accession>
<comment type="function">
    <text evidence="1">Catalyzes the hydrolysis of UDP-3-O-myristoyl-N-acetylglucosamine to form UDP-3-O-myristoylglucosamine and acetate, the committed step in lipid A biosynthesis.</text>
</comment>
<comment type="catalytic activity">
    <reaction evidence="1">
        <text>a UDP-3-O-[(3R)-3-hydroxyacyl]-N-acetyl-alpha-D-glucosamine + H2O = a UDP-3-O-[(3R)-3-hydroxyacyl]-alpha-D-glucosamine + acetate</text>
        <dbReference type="Rhea" id="RHEA:67816"/>
        <dbReference type="ChEBI" id="CHEBI:15377"/>
        <dbReference type="ChEBI" id="CHEBI:30089"/>
        <dbReference type="ChEBI" id="CHEBI:137740"/>
        <dbReference type="ChEBI" id="CHEBI:173225"/>
        <dbReference type="EC" id="3.5.1.108"/>
    </reaction>
</comment>
<comment type="cofactor">
    <cofactor evidence="1">
        <name>Zn(2+)</name>
        <dbReference type="ChEBI" id="CHEBI:29105"/>
    </cofactor>
</comment>
<comment type="pathway">
    <text evidence="1">Glycolipid biosynthesis; lipid IV(A) biosynthesis; lipid IV(A) from (3R)-3-hydroxytetradecanoyl-[acyl-carrier-protein] and UDP-N-acetyl-alpha-D-glucosamine: step 2/6.</text>
</comment>
<comment type="similarity">
    <text evidence="1">Belongs to the LpxC family.</text>
</comment>
<sequence>MIKQRTLKRIVQATGVGLHTGKKVTLTLRPAPANTGVIYRRTDLNPPVDFPADAKSVRDTMLCTCLVNEHDVRISTVEHLNAALAGLGIDNIVIEVDAPEIPIMDGSAAPFVYLLLDAGIDELNCAKKFVRIKETVRVEDGDKWAEFKPYNGFTLDFTIDFNHPAIDSSSQRYAMNFSADAFMRQISRARTFGFMRDIEYLQSRGLCLGGSFDCAIVVDDYRVLNEDGLRFEDEFVRHKMLDAIGDLFMCGHNIIGAFTAYKSGHALNNKLLQAVLAKQEAWEYVTFQDDAELPLAFKAPSTVLA</sequence>
<evidence type="ECO:0000255" key="1">
    <source>
        <dbReference type="HAMAP-Rule" id="MF_00388"/>
    </source>
</evidence>
<name>LPXC_CITK8</name>